<comment type="function">
    <text>NPY is implicated in the control of feeding and in secretion of gonadotrophin-release hormone.</text>
</comment>
<comment type="subcellular location">
    <subcellularLocation>
        <location>Secreted</location>
    </subcellularLocation>
</comment>
<comment type="similarity">
    <text evidence="2">Belongs to the NPY family.</text>
</comment>
<proteinExistence type="inferred from homology"/>
<reference key="1">
    <citation type="submission" date="1998-04" db="EMBL/GenBank/DDBJ databases">
        <title>Neuropeptide Y, endocrine gut peptide YY and fish pancreatic peptide Y expression in the brain of a teleost fish (Dicentrarchus labrax): from cloning to evolutionary considerations.</title>
        <authorList>
            <person name="Cerda-Reverter J.M."/>
            <person name="Martinez-Rodriguez G."/>
            <person name="Zanuy S."/>
            <person name="Carrillo M."/>
            <person name="Larhammar D."/>
        </authorList>
    </citation>
    <scope>NUCLEOTIDE SEQUENCE</scope>
    <source>
        <tissue>Brain</tissue>
    </source>
</reference>
<reference key="2">
    <citation type="submission" date="1998-04" db="EMBL/GenBank/DDBJ databases">
        <title>Deduced peptide sequence of neuropeptide Y exon 2 from sea bass (Dicentrarchus labrax).</title>
        <authorList>
            <person name="Cerda-Reverter J.M."/>
            <person name="Martinez-Rodriguez G."/>
            <person name="Zanuy S."/>
            <person name="Carrillo M."/>
            <person name="Larhammar D."/>
        </authorList>
    </citation>
    <scope>NUCLEOTIDE SEQUENCE OF 1-62</scope>
    <source>
        <tissue>Blood</tissue>
    </source>
</reference>
<accession>Q9PTA0</accession>
<accession>Q9PT97</accession>
<name>NPY_DICLA</name>
<feature type="signal peptide" evidence="1">
    <location>
        <begin position="1"/>
        <end position="28"/>
    </location>
</feature>
<feature type="peptide" id="PRO_0000025341" description="Neuropeptide Y">
    <location>
        <begin position="29"/>
        <end position="64"/>
    </location>
</feature>
<feature type="peptide" id="PRO_0000025342" description="C-flanking peptide of NPY">
    <location>
        <begin position="68"/>
        <end position="99"/>
    </location>
</feature>
<feature type="modified residue" description="Tyrosine amide" evidence="1">
    <location>
        <position position="64"/>
    </location>
</feature>
<keyword id="KW-0027">Amidation</keyword>
<keyword id="KW-0165">Cleavage on pair of basic residues</keyword>
<keyword id="KW-0527">Neuropeptide</keyword>
<keyword id="KW-1185">Reference proteome</keyword>
<keyword id="KW-0964">Secreted</keyword>
<keyword id="KW-0732">Signal</keyword>
<organism>
    <name type="scientific">Dicentrarchus labrax</name>
    <name type="common">European seabass</name>
    <name type="synonym">Morone labrax</name>
    <dbReference type="NCBI Taxonomy" id="13489"/>
    <lineage>
        <taxon>Eukaryota</taxon>
        <taxon>Metazoa</taxon>
        <taxon>Chordata</taxon>
        <taxon>Craniata</taxon>
        <taxon>Vertebrata</taxon>
        <taxon>Euteleostomi</taxon>
        <taxon>Actinopterygii</taxon>
        <taxon>Neopterygii</taxon>
        <taxon>Teleostei</taxon>
        <taxon>Neoteleostei</taxon>
        <taxon>Acanthomorphata</taxon>
        <taxon>Eupercaria</taxon>
        <taxon>Moronidae</taxon>
        <taxon>Dicentrarchus</taxon>
    </lineage>
</organism>
<dbReference type="EMBL" id="AJ005378">
    <property type="protein sequence ID" value="CAB64932.1"/>
    <property type="molecule type" value="mRNA"/>
</dbReference>
<dbReference type="EMBL" id="AJ005381">
    <property type="protein sequence ID" value="CAB64935.1"/>
    <property type="molecule type" value="Genomic_DNA"/>
</dbReference>
<dbReference type="RefSeq" id="XP_051247175.1">
    <property type="nucleotide sequence ID" value="XM_051391215.1"/>
</dbReference>
<dbReference type="Ensembl" id="ENSDLAT00005019115.2">
    <property type="protein sequence ID" value="ENSDLAP00005017692.1"/>
    <property type="gene ID" value="ENSDLAG00005008510.2"/>
</dbReference>
<dbReference type="GeneID" id="127358247"/>
<dbReference type="GeneTree" id="ENSGT00940000156475"/>
<dbReference type="OMA" id="YEDPAMW"/>
<dbReference type="OrthoDB" id="9852947at2759"/>
<dbReference type="Proteomes" id="UP000694389">
    <property type="component" value="Unassembled WGS sequence"/>
</dbReference>
<dbReference type="GO" id="GO:0005615">
    <property type="term" value="C:extracellular space"/>
    <property type="evidence" value="ECO:0007669"/>
    <property type="project" value="TreeGrafter"/>
</dbReference>
<dbReference type="GO" id="GO:0005184">
    <property type="term" value="F:neuropeptide hormone activity"/>
    <property type="evidence" value="ECO:0007669"/>
    <property type="project" value="TreeGrafter"/>
</dbReference>
<dbReference type="GO" id="GO:0031843">
    <property type="term" value="F:type 2 neuropeptide Y receptor binding"/>
    <property type="evidence" value="ECO:0007669"/>
    <property type="project" value="Ensembl"/>
</dbReference>
<dbReference type="GO" id="GO:0007631">
    <property type="term" value="P:feeding behavior"/>
    <property type="evidence" value="ECO:0007669"/>
    <property type="project" value="TreeGrafter"/>
</dbReference>
<dbReference type="GO" id="GO:0071878">
    <property type="term" value="P:negative regulation of adenylate cyclase-activating adrenergic receptor signaling pathway"/>
    <property type="evidence" value="ECO:0007669"/>
    <property type="project" value="Ensembl"/>
</dbReference>
<dbReference type="GO" id="GO:0007218">
    <property type="term" value="P:neuropeptide signaling pathway"/>
    <property type="evidence" value="ECO:0007669"/>
    <property type="project" value="UniProtKB-KW"/>
</dbReference>
<dbReference type="GO" id="GO:0045938">
    <property type="term" value="P:positive regulation of circadian sleep/wake cycle, sleep"/>
    <property type="evidence" value="ECO:0007669"/>
    <property type="project" value="Ensembl"/>
</dbReference>
<dbReference type="GO" id="GO:2000253">
    <property type="term" value="P:positive regulation of feeding behavior"/>
    <property type="evidence" value="ECO:0007669"/>
    <property type="project" value="Ensembl"/>
</dbReference>
<dbReference type="CDD" id="cd00126">
    <property type="entry name" value="PAH"/>
    <property type="match status" value="1"/>
</dbReference>
<dbReference type="Gene3D" id="6.10.250.900">
    <property type="match status" value="1"/>
</dbReference>
<dbReference type="InterPro" id="IPR001955">
    <property type="entry name" value="Pancreatic_hormone-like"/>
</dbReference>
<dbReference type="InterPro" id="IPR020392">
    <property type="entry name" value="Pancreatic_hormone-like_CS"/>
</dbReference>
<dbReference type="PANTHER" id="PTHR10533">
    <property type="entry name" value="NEUROPEPTIDE Y/PANCREATIC HORMONE/PEPTIDE YY"/>
    <property type="match status" value="1"/>
</dbReference>
<dbReference type="PANTHER" id="PTHR10533:SF5">
    <property type="entry name" value="PRO-NEUROPEPTIDE Y"/>
    <property type="match status" value="1"/>
</dbReference>
<dbReference type="Pfam" id="PF00159">
    <property type="entry name" value="Hormone_3"/>
    <property type="match status" value="1"/>
</dbReference>
<dbReference type="PRINTS" id="PR00278">
    <property type="entry name" value="PANCHORMONE"/>
</dbReference>
<dbReference type="SMART" id="SM00309">
    <property type="entry name" value="PAH"/>
    <property type="match status" value="1"/>
</dbReference>
<dbReference type="PROSITE" id="PS00265">
    <property type="entry name" value="PANCREATIC_HORMONE_1"/>
    <property type="match status" value="1"/>
</dbReference>
<dbReference type="PROSITE" id="PS50276">
    <property type="entry name" value="PANCREATIC_HORMONE_2"/>
    <property type="match status" value="1"/>
</dbReference>
<gene>
    <name type="primary">npy</name>
</gene>
<sequence>MHPNLVSWLGTLGFLLWALLCLGALTEGYPVKPENPGEDAPAEELAKYYSALRHYINLITRQRYGKRSSPEILDTLVSELLLKESTDQLPQSRYDPSLW</sequence>
<evidence type="ECO:0000250" key="1"/>
<evidence type="ECO:0000305" key="2"/>
<protein>
    <recommendedName>
        <fullName>Pro-neuropeptide Y</fullName>
    </recommendedName>
    <component>
        <recommendedName>
            <fullName>Neuropeptide Y</fullName>
        </recommendedName>
        <alternativeName>
            <fullName>Neuropeptide tyrosine</fullName>
            <shortName>NPY</shortName>
        </alternativeName>
    </component>
    <component>
        <recommendedName>
            <fullName>C-flanking peptide of NPY</fullName>
            <shortName>CPON</shortName>
        </recommendedName>
    </component>
</protein>